<dbReference type="EMBL" id="AK000913">
    <property type="status" value="NOT_ANNOTATED_CDS"/>
    <property type="molecule type" value="mRNA"/>
</dbReference>
<dbReference type="EMBL" id="AK093783">
    <property type="protein sequence ID" value="BAG52763.1"/>
    <property type="status" value="ALT_INIT"/>
    <property type="molecule type" value="mRNA"/>
</dbReference>
<dbReference type="EMBL" id="AK293236">
    <property type="protein sequence ID" value="BAG56774.1"/>
    <property type="molecule type" value="mRNA"/>
</dbReference>
<dbReference type="EMBL" id="AK295010">
    <property type="protein sequence ID" value="BAG58070.1"/>
    <property type="status" value="ALT_SEQ"/>
    <property type="molecule type" value="mRNA"/>
</dbReference>
<dbReference type="EMBL" id="AK304695">
    <property type="protein sequence ID" value="BAG65465.1"/>
    <property type="molecule type" value="mRNA"/>
</dbReference>
<dbReference type="EMBL" id="BX640804">
    <property type="protein sequence ID" value="CAE45886.1"/>
    <property type="molecule type" value="mRNA"/>
</dbReference>
<dbReference type="EMBL" id="BX640807">
    <property type="protein sequence ID" value="CAE45889.1"/>
    <property type="molecule type" value="mRNA"/>
</dbReference>
<dbReference type="EMBL" id="BX648753">
    <property type="status" value="NOT_ANNOTATED_CDS"/>
    <property type="molecule type" value="mRNA"/>
</dbReference>
<dbReference type="EMBL" id="AL591767">
    <property type="status" value="NOT_ANNOTATED_CDS"/>
    <property type="molecule type" value="Genomic_DNA"/>
</dbReference>
<dbReference type="EMBL" id="AL627171">
    <property type="status" value="NOT_ANNOTATED_CDS"/>
    <property type="molecule type" value="Genomic_DNA"/>
</dbReference>
<dbReference type="EMBL" id="BC006001">
    <property type="protein sequence ID" value="AAH06001.1"/>
    <property type="status" value="ALT_SEQ"/>
    <property type="molecule type" value="mRNA"/>
</dbReference>
<dbReference type="EMBL" id="BC020794">
    <property type="protein sequence ID" value="AAH20794.2"/>
    <property type="status" value="ALT_INIT"/>
    <property type="molecule type" value="mRNA"/>
</dbReference>
<dbReference type="EMBL" id="BC056687">
    <property type="protein sequence ID" value="AAH56687.1"/>
    <property type="status" value="ALT_SEQ"/>
    <property type="molecule type" value="mRNA"/>
</dbReference>
<dbReference type="EMBL" id="BC064364">
    <property type="protein sequence ID" value="AAH64364.1"/>
    <property type="molecule type" value="mRNA"/>
</dbReference>
<dbReference type="EMBL" id="BC107764">
    <property type="protein sequence ID" value="AAI07765.1"/>
    <property type="status" value="ALT_INIT"/>
    <property type="molecule type" value="mRNA"/>
</dbReference>
<dbReference type="EMBL" id="AF039687">
    <property type="protein sequence ID" value="AAC18036.1"/>
    <property type="status" value="ALT_FRAME"/>
    <property type="molecule type" value="mRNA"/>
</dbReference>
<dbReference type="CCDS" id="CCDS9694.1">
    <molecule id="O60524-1"/>
</dbReference>
<dbReference type="RefSeq" id="NP_001288661.2">
    <molecule id="O60524-3"/>
    <property type="nucleotide sequence ID" value="NM_001301732.3"/>
</dbReference>
<dbReference type="RefSeq" id="NP_004704.2">
    <molecule id="O60524-1"/>
    <property type="nucleotide sequence ID" value="NM_004713.5"/>
</dbReference>
<dbReference type="PDB" id="3J92">
    <property type="method" value="EM"/>
    <property type="resolution" value="3.60 A"/>
    <property type="chains" value="u/v=1-501"/>
</dbReference>
<dbReference type="PDBsum" id="3J92"/>
<dbReference type="EMDB" id="EMD-2832"/>
<dbReference type="SMR" id="O60524"/>
<dbReference type="ComplexPortal" id="CPX-2656">
    <property type="entry name" value="Ribosome quality control complex"/>
</dbReference>
<dbReference type="FunCoup" id="O60524">
    <property type="interactions" value="2305"/>
</dbReference>
<dbReference type="IntAct" id="O60524">
    <property type="interactions" value="45"/>
</dbReference>
<dbReference type="MINT" id="O60524"/>
<dbReference type="STRING" id="9606.ENSP00000298310"/>
<dbReference type="GlyGen" id="O60524">
    <property type="glycosylation" value="2 sites, 1 N-linked glycan (1 site), 1 O-linked glycan (1 site)"/>
</dbReference>
<dbReference type="iPTMnet" id="O60524"/>
<dbReference type="PhosphoSitePlus" id="O60524"/>
<dbReference type="BioMuta" id="NEMF"/>
<dbReference type="jPOST" id="O60524"/>
<dbReference type="MassIVE" id="O60524"/>
<dbReference type="PaxDb" id="9606-ENSP00000298310"/>
<dbReference type="PeptideAtlas" id="O60524"/>
<dbReference type="ProteomicsDB" id="49458">
    <molecule id="O60524-1"/>
</dbReference>
<dbReference type="ProteomicsDB" id="49459">
    <molecule id="O60524-2"/>
</dbReference>
<dbReference type="ProteomicsDB" id="49460">
    <molecule id="O60524-3"/>
</dbReference>
<dbReference type="ProteomicsDB" id="49461">
    <molecule id="O60524-4"/>
</dbReference>
<dbReference type="ProteomicsDB" id="49462">
    <molecule id="O60524-5"/>
</dbReference>
<dbReference type="Pumba" id="O60524"/>
<dbReference type="Antibodypedia" id="140">
    <property type="antibodies" value="213 antibodies from 30 providers"/>
</dbReference>
<dbReference type="DNASU" id="9147"/>
<dbReference type="Ensembl" id="ENST00000298310.10">
    <molecule id="O60524-1"/>
    <property type="protein sequence ID" value="ENSP00000298310.5"/>
    <property type="gene ID" value="ENSG00000165525.18"/>
</dbReference>
<dbReference type="GeneID" id="9147"/>
<dbReference type="KEGG" id="hsa:9147"/>
<dbReference type="MANE-Select" id="ENST00000298310.10">
    <property type="protein sequence ID" value="ENSP00000298310.5"/>
    <property type="RefSeq nucleotide sequence ID" value="NM_004713.6"/>
    <property type="RefSeq protein sequence ID" value="NP_004704.3"/>
</dbReference>
<dbReference type="UCSC" id="uc001wxc.4">
    <molecule id="O60524-1"/>
    <property type="organism name" value="human"/>
</dbReference>
<dbReference type="AGR" id="HGNC:10663"/>
<dbReference type="CTD" id="9147"/>
<dbReference type="DisGeNET" id="9147"/>
<dbReference type="GeneCards" id="NEMF"/>
<dbReference type="HGNC" id="HGNC:10663">
    <property type="gene designation" value="NEMF"/>
</dbReference>
<dbReference type="HPA" id="ENSG00000165525">
    <property type="expression patterns" value="Low tissue specificity"/>
</dbReference>
<dbReference type="MalaCards" id="NEMF"/>
<dbReference type="MIM" id="608378">
    <property type="type" value="gene"/>
</dbReference>
<dbReference type="MIM" id="619099">
    <property type="type" value="phenotype"/>
</dbReference>
<dbReference type="neXtProt" id="NX_O60524"/>
<dbReference type="OpenTargets" id="ENSG00000165525"/>
<dbReference type="Orphanet" id="88616">
    <property type="disease" value="Autosomal recessive non-syndromic intellectual disability"/>
</dbReference>
<dbReference type="PharmGKB" id="PA35593"/>
<dbReference type="VEuPathDB" id="HostDB:ENSG00000165525"/>
<dbReference type="eggNOG" id="KOG2030">
    <property type="taxonomic scope" value="Eukaryota"/>
</dbReference>
<dbReference type="GeneTree" id="ENSGT00390000018516"/>
<dbReference type="HOGENOM" id="CLU_003612_1_0_1"/>
<dbReference type="InParanoid" id="O60524"/>
<dbReference type="OMA" id="MFLEFFA"/>
<dbReference type="OrthoDB" id="207084at2759"/>
<dbReference type="PAN-GO" id="O60524">
    <property type="GO annotations" value="5 GO annotations based on evolutionary models"/>
</dbReference>
<dbReference type="PhylomeDB" id="O60524"/>
<dbReference type="TreeFam" id="TF300515"/>
<dbReference type="PathwayCommons" id="O60524"/>
<dbReference type="SignaLink" id="O60524"/>
<dbReference type="SIGNOR" id="O60524"/>
<dbReference type="BioGRID-ORCS" id="9147">
    <property type="hits" value="128 hits in 1161 CRISPR screens"/>
</dbReference>
<dbReference type="ChiTaRS" id="NEMF">
    <property type="organism name" value="human"/>
</dbReference>
<dbReference type="GenomeRNAi" id="9147"/>
<dbReference type="Pharos" id="O60524">
    <property type="development level" value="Tbio"/>
</dbReference>
<dbReference type="PRO" id="PR:O60524"/>
<dbReference type="Proteomes" id="UP000005640">
    <property type="component" value="Chromosome 14"/>
</dbReference>
<dbReference type="RNAct" id="O60524">
    <property type="molecule type" value="protein"/>
</dbReference>
<dbReference type="Bgee" id="ENSG00000165525">
    <property type="expression patterns" value="Expressed in calcaneal tendon and 211 other cell types or tissues"/>
</dbReference>
<dbReference type="ExpressionAtlas" id="O60524">
    <property type="expression patterns" value="baseline and differential"/>
</dbReference>
<dbReference type="GO" id="GO:0005829">
    <property type="term" value="C:cytosol"/>
    <property type="evidence" value="ECO:0000314"/>
    <property type="project" value="UniProtKB"/>
</dbReference>
<dbReference type="GO" id="GO:0022626">
    <property type="term" value="C:cytosolic ribosome"/>
    <property type="evidence" value="ECO:0000314"/>
    <property type="project" value="UniProt"/>
</dbReference>
<dbReference type="GO" id="GO:0005634">
    <property type="term" value="C:nucleus"/>
    <property type="evidence" value="ECO:0007669"/>
    <property type="project" value="UniProtKB-SubCell"/>
</dbReference>
<dbReference type="GO" id="GO:1990112">
    <property type="term" value="C:RQC complex"/>
    <property type="evidence" value="ECO:0000314"/>
    <property type="project" value="UniProtKB"/>
</dbReference>
<dbReference type="GO" id="GO:1904678">
    <property type="term" value="F:alpha-aminoacyl-tRNA binding"/>
    <property type="evidence" value="ECO:0000314"/>
    <property type="project" value="UniProtKB"/>
</dbReference>
<dbReference type="GO" id="GO:0043023">
    <property type="term" value="F:ribosomal large subunit binding"/>
    <property type="evidence" value="ECO:0000314"/>
    <property type="project" value="UniProtKB"/>
</dbReference>
<dbReference type="GO" id="GO:0000049">
    <property type="term" value="F:tRNA binding"/>
    <property type="evidence" value="ECO:0000318"/>
    <property type="project" value="GO_Central"/>
</dbReference>
<dbReference type="GO" id="GO:0140708">
    <property type="term" value="P:CAT tailing"/>
    <property type="evidence" value="ECO:0000314"/>
    <property type="project" value="UniProtKB"/>
</dbReference>
<dbReference type="GO" id="GO:0051168">
    <property type="term" value="P:nuclear export"/>
    <property type="evidence" value="ECO:0000315"/>
    <property type="project" value="UniProtKB"/>
</dbReference>
<dbReference type="GO" id="GO:0065003">
    <property type="term" value="P:protein-containing complex assembly"/>
    <property type="evidence" value="ECO:0000315"/>
    <property type="project" value="UniProtKB"/>
</dbReference>
<dbReference type="GO" id="GO:0072344">
    <property type="term" value="P:rescue of stalled ribosome"/>
    <property type="evidence" value="ECO:0000314"/>
    <property type="project" value="UniProt"/>
</dbReference>
<dbReference type="GO" id="GO:1990116">
    <property type="term" value="P:ribosome-associated ubiquitin-dependent protein catabolic process"/>
    <property type="evidence" value="ECO:0000314"/>
    <property type="project" value="UniProtKB"/>
</dbReference>
<dbReference type="FunFam" id="2.30.310.10:FF:000001">
    <property type="entry name" value="Nuclear export mediator factor Nemf"/>
    <property type="match status" value="1"/>
</dbReference>
<dbReference type="Gene3D" id="2.30.310.10">
    <property type="entry name" value="ibrinogen binding protein from staphylococcus aureus domain"/>
    <property type="match status" value="1"/>
</dbReference>
<dbReference type="InterPro" id="IPR021846">
    <property type="entry name" value="NFACT-C"/>
</dbReference>
<dbReference type="InterPro" id="IPR008532">
    <property type="entry name" value="NFACT_RNA-bd"/>
</dbReference>
<dbReference type="InterPro" id="IPR051608">
    <property type="entry name" value="RQC_Subunit_NEMF"/>
</dbReference>
<dbReference type="PANTHER" id="PTHR15239">
    <property type="entry name" value="NUCLEAR EXPORT MEDIATOR FACTOR NEMF"/>
    <property type="match status" value="1"/>
</dbReference>
<dbReference type="PANTHER" id="PTHR15239:SF6">
    <property type="entry name" value="RIBOSOME QUALITY CONTROL COMPLEX SUBUNIT NEMF"/>
    <property type="match status" value="1"/>
</dbReference>
<dbReference type="Pfam" id="PF11923">
    <property type="entry name" value="NFACT-C"/>
    <property type="match status" value="1"/>
</dbReference>
<dbReference type="Pfam" id="PF05670">
    <property type="entry name" value="NFACT-R_1"/>
    <property type="match status" value="1"/>
</dbReference>
<dbReference type="Pfam" id="PF05833">
    <property type="entry name" value="NFACT_N"/>
    <property type="match status" value="1"/>
</dbReference>
<reference key="1">
    <citation type="journal article" date="2004" name="Nat. Genet.">
        <title>Complete sequencing and characterization of 21,243 full-length human cDNAs.</title>
        <authorList>
            <person name="Ota T."/>
            <person name="Suzuki Y."/>
            <person name="Nishikawa T."/>
            <person name="Otsuki T."/>
            <person name="Sugiyama T."/>
            <person name="Irie R."/>
            <person name="Wakamatsu A."/>
            <person name="Hayashi K."/>
            <person name="Sato H."/>
            <person name="Nagai K."/>
            <person name="Kimura K."/>
            <person name="Makita H."/>
            <person name="Sekine M."/>
            <person name="Obayashi M."/>
            <person name="Nishi T."/>
            <person name="Shibahara T."/>
            <person name="Tanaka T."/>
            <person name="Ishii S."/>
            <person name="Yamamoto J."/>
            <person name="Saito K."/>
            <person name="Kawai Y."/>
            <person name="Isono Y."/>
            <person name="Nakamura Y."/>
            <person name="Nagahari K."/>
            <person name="Murakami K."/>
            <person name="Yasuda T."/>
            <person name="Iwayanagi T."/>
            <person name="Wagatsuma M."/>
            <person name="Shiratori A."/>
            <person name="Sudo H."/>
            <person name="Hosoiri T."/>
            <person name="Kaku Y."/>
            <person name="Kodaira H."/>
            <person name="Kondo H."/>
            <person name="Sugawara M."/>
            <person name="Takahashi M."/>
            <person name="Kanda K."/>
            <person name="Yokoi T."/>
            <person name="Furuya T."/>
            <person name="Kikkawa E."/>
            <person name="Omura Y."/>
            <person name="Abe K."/>
            <person name="Kamihara K."/>
            <person name="Katsuta N."/>
            <person name="Sato K."/>
            <person name="Tanikawa M."/>
            <person name="Yamazaki M."/>
            <person name="Ninomiya K."/>
            <person name="Ishibashi T."/>
            <person name="Yamashita H."/>
            <person name="Murakawa K."/>
            <person name="Fujimori K."/>
            <person name="Tanai H."/>
            <person name="Kimata M."/>
            <person name="Watanabe M."/>
            <person name="Hiraoka S."/>
            <person name="Chiba Y."/>
            <person name="Ishida S."/>
            <person name="Ono Y."/>
            <person name="Takiguchi S."/>
            <person name="Watanabe S."/>
            <person name="Yosida M."/>
            <person name="Hotuta T."/>
            <person name="Kusano J."/>
            <person name="Kanehori K."/>
            <person name="Takahashi-Fujii A."/>
            <person name="Hara H."/>
            <person name="Tanase T.-O."/>
            <person name="Nomura Y."/>
            <person name="Togiya S."/>
            <person name="Komai F."/>
            <person name="Hara R."/>
            <person name="Takeuchi K."/>
            <person name="Arita M."/>
            <person name="Imose N."/>
            <person name="Musashino K."/>
            <person name="Yuuki H."/>
            <person name="Oshima A."/>
            <person name="Sasaki N."/>
            <person name="Aotsuka S."/>
            <person name="Yoshikawa Y."/>
            <person name="Matsunawa H."/>
            <person name="Ichihara T."/>
            <person name="Shiohata N."/>
            <person name="Sano S."/>
            <person name="Moriya S."/>
            <person name="Momiyama H."/>
            <person name="Satoh N."/>
            <person name="Takami S."/>
            <person name="Terashima Y."/>
            <person name="Suzuki O."/>
            <person name="Nakagawa S."/>
            <person name="Senoh A."/>
            <person name="Mizoguchi H."/>
            <person name="Goto Y."/>
            <person name="Shimizu F."/>
            <person name="Wakebe H."/>
            <person name="Hishigaki H."/>
            <person name="Watanabe T."/>
            <person name="Sugiyama A."/>
            <person name="Takemoto M."/>
            <person name="Kawakami B."/>
            <person name="Yamazaki M."/>
            <person name="Watanabe K."/>
            <person name="Kumagai A."/>
            <person name="Itakura S."/>
            <person name="Fukuzumi Y."/>
            <person name="Fujimori Y."/>
            <person name="Komiyama M."/>
            <person name="Tashiro H."/>
            <person name="Tanigami A."/>
            <person name="Fujiwara T."/>
            <person name="Ono T."/>
            <person name="Yamada K."/>
            <person name="Fujii Y."/>
            <person name="Ozaki K."/>
            <person name="Hirao M."/>
            <person name="Ohmori Y."/>
            <person name="Kawabata A."/>
            <person name="Hikiji T."/>
            <person name="Kobatake N."/>
            <person name="Inagaki H."/>
            <person name="Ikema Y."/>
            <person name="Okamoto S."/>
            <person name="Okitani R."/>
            <person name="Kawakami T."/>
            <person name="Noguchi S."/>
            <person name="Itoh T."/>
            <person name="Shigeta K."/>
            <person name="Senba T."/>
            <person name="Matsumura K."/>
            <person name="Nakajima Y."/>
            <person name="Mizuno T."/>
            <person name="Morinaga M."/>
            <person name="Sasaki M."/>
            <person name="Togashi T."/>
            <person name="Oyama M."/>
            <person name="Hata H."/>
            <person name="Watanabe M."/>
            <person name="Komatsu T."/>
            <person name="Mizushima-Sugano J."/>
            <person name="Satoh T."/>
            <person name="Shirai Y."/>
            <person name="Takahashi Y."/>
            <person name="Nakagawa K."/>
            <person name="Okumura K."/>
            <person name="Nagase T."/>
            <person name="Nomura N."/>
            <person name="Kikuchi H."/>
            <person name="Masuho Y."/>
            <person name="Yamashita R."/>
            <person name="Nakai K."/>
            <person name="Yada T."/>
            <person name="Nakamura Y."/>
            <person name="Ohara O."/>
            <person name="Isogai T."/>
            <person name="Sugano S."/>
        </authorList>
    </citation>
    <scope>NUCLEOTIDE SEQUENCE [LARGE SCALE MRNA] (ISOFORM 3)</scope>
    <scope>NUCLEOTIDE SEQUENCE [LARGE SCALE MRNA] OF 1-1041 (ISOFORM 4)</scope>
    <scope>NUCLEOTIDE SEQUENCE [LARGE SCALE MRNA] OF 1-1049 (ISOFORM 5)</scope>
    <scope>NUCLEOTIDE SEQUENCE [LARGE SCALE MRNA] OF 1-518 (ISOFORM 1)</scope>
    <scope>VARIANT CYS-257</scope>
    <source>
        <tissue>Astrocyte</tissue>
        <tissue>Brain</tissue>
        <tissue>Embryo</tissue>
        <tissue>Thymus</tissue>
        <tissue>Uterus</tissue>
    </source>
</reference>
<reference key="2">
    <citation type="journal article" date="2007" name="BMC Genomics">
        <title>The full-ORF clone resource of the German cDNA consortium.</title>
        <authorList>
            <person name="Bechtel S."/>
            <person name="Rosenfelder H."/>
            <person name="Duda A."/>
            <person name="Schmidt C.P."/>
            <person name="Ernst U."/>
            <person name="Wellenreuther R."/>
            <person name="Mehrle A."/>
            <person name="Schuster C."/>
            <person name="Bahr A."/>
            <person name="Bloecker H."/>
            <person name="Heubner D."/>
            <person name="Hoerlein A."/>
            <person name="Michel G."/>
            <person name="Wedler H."/>
            <person name="Koehrer K."/>
            <person name="Ottenwaelder B."/>
            <person name="Poustka A."/>
            <person name="Wiemann S."/>
            <person name="Schupp I."/>
        </authorList>
    </citation>
    <scope>NUCLEOTIDE SEQUENCE [LARGE SCALE MRNA] (ISOFORM 2)</scope>
    <scope>NUCLEOTIDE SEQUENCE [LARGE SCALE MRNA] OF 418-1076 (ISOFORM 1)</scope>
    <source>
        <tissue>Small intestine</tissue>
    </source>
</reference>
<reference key="3">
    <citation type="journal article" date="2003" name="Nature">
        <title>The DNA sequence and analysis of human chromosome 14.</title>
        <authorList>
            <person name="Heilig R."/>
            <person name="Eckenberg R."/>
            <person name="Petit J.-L."/>
            <person name="Fonknechten N."/>
            <person name="Da Silva C."/>
            <person name="Cattolico L."/>
            <person name="Levy M."/>
            <person name="Barbe V."/>
            <person name="De Berardinis V."/>
            <person name="Ureta-Vidal A."/>
            <person name="Pelletier E."/>
            <person name="Vico V."/>
            <person name="Anthouard V."/>
            <person name="Rowen L."/>
            <person name="Madan A."/>
            <person name="Qin S."/>
            <person name="Sun H."/>
            <person name="Du H."/>
            <person name="Pepin K."/>
            <person name="Artiguenave F."/>
            <person name="Robert C."/>
            <person name="Cruaud C."/>
            <person name="Bruels T."/>
            <person name="Jaillon O."/>
            <person name="Friedlander L."/>
            <person name="Samson G."/>
            <person name="Brottier P."/>
            <person name="Cure S."/>
            <person name="Segurens B."/>
            <person name="Aniere F."/>
            <person name="Samain S."/>
            <person name="Crespeau H."/>
            <person name="Abbasi N."/>
            <person name="Aiach N."/>
            <person name="Boscus D."/>
            <person name="Dickhoff R."/>
            <person name="Dors M."/>
            <person name="Dubois I."/>
            <person name="Friedman C."/>
            <person name="Gouyvenoux M."/>
            <person name="James R."/>
            <person name="Madan A."/>
            <person name="Mairey-Estrada B."/>
            <person name="Mangenot S."/>
            <person name="Martins N."/>
            <person name="Menard M."/>
            <person name="Oztas S."/>
            <person name="Ratcliffe A."/>
            <person name="Shaffer T."/>
            <person name="Trask B."/>
            <person name="Vacherie B."/>
            <person name="Bellemere C."/>
            <person name="Belser C."/>
            <person name="Besnard-Gonnet M."/>
            <person name="Bartol-Mavel D."/>
            <person name="Boutard M."/>
            <person name="Briez-Silla S."/>
            <person name="Combette S."/>
            <person name="Dufosse-Laurent V."/>
            <person name="Ferron C."/>
            <person name="Lechaplais C."/>
            <person name="Louesse C."/>
            <person name="Muselet D."/>
            <person name="Magdelenat G."/>
            <person name="Pateau E."/>
            <person name="Petit E."/>
            <person name="Sirvain-Trukniewicz P."/>
            <person name="Trybou A."/>
            <person name="Vega-Czarny N."/>
            <person name="Bataille E."/>
            <person name="Bluet E."/>
            <person name="Bordelais I."/>
            <person name="Dubois M."/>
            <person name="Dumont C."/>
            <person name="Guerin T."/>
            <person name="Haffray S."/>
            <person name="Hammadi R."/>
            <person name="Muanga J."/>
            <person name="Pellouin V."/>
            <person name="Robert D."/>
            <person name="Wunderle E."/>
            <person name="Gauguet G."/>
            <person name="Roy A."/>
            <person name="Sainte-Marthe L."/>
            <person name="Verdier J."/>
            <person name="Verdier-Discala C."/>
            <person name="Hillier L.W."/>
            <person name="Fulton L."/>
            <person name="McPherson J."/>
            <person name="Matsuda F."/>
            <person name="Wilson R."/>
            <person name="Scarpelli C."/>
            <person name="Gyapay G."/>
            <person name="Wincker P."/>
            <person name="Saurin W."/>
            <person name="Quetier F."/>
            <person name="Waterston R."/>
            <person name="Hood L."/>
            <person name="Weissenbach J."/>
        </authorList>
    </citation>
    <scope>NUCLEOTIDE SEQUENCE [LARGE SCALE GENOMIC DNA]</scope>
</reference>
<reference key="4">
    <citation type="journal article" date="2004" name="Genome Res.">
        <title>The status, quality, and expansion of the NIH full-length cDNA project: the Mammalian Gene Collection (MGC).</title>
        <authorList>
            <consortium name="The MGC Project Team"/>
        </authorList>
    </citation>
    <scope>NUCLEOTIDE SEQUENCE [LARGE SCALE MRNA] OF 1-438 AND 620-1076 (ISOFORM 1)</scope>
    <scope>NUCLEOTIDE SEQUENCE [LARGE SCALE MRNA] OF 1-432 (ISOFORM 4)</scope>
    <scope>VARIANT CYS-257</scope>
    <source>
        <tissue>Brain</tissue>
        <tissue>Kidney</tissue>
        <tissue>Placenta</tissue>
    </source>
</reference>
<reference key="5">
    <citation type="journal article" date="1998" name="Int. J. Cancer">
        <title>Characterization of human colon cancer antigens recognized by autologous antibodies.</title>
        <authorList>
            <person name="Scanlan M.J."/>
            <person name="Chen Y.-T."/>
            <person name="Williamson B."/>
            <person name="Gure A.O."/>
            <person name="Stockert E."/>
            <person name="Gordan J.D."/>
            <person name="Tuereci O."/>
            <person name="Sahin U."/>
            <person name="Pfreundschuh M."/>
            <person name="Old L.J."/>
        </authorList>
    </citation>
    <scope>NUCLEOTIDE SEQUENCE [MRNA] OF 712-1076</scope>
    <source>
        <tissue>Colon carcinoma</tissue>
    </source>
</reference>
<reference key="6">
    <citation type="journal article" date="2005" name="Oncogene">
        <title>Drosophila caliban, a nuclear export mediator, can function as a tumor suppressor in human lung cancer cells.</title>
        <authorList>
            <person name="Bi X."/>
            <person name="Jones T."/>
            <person name="Abbasi F."/>
            <person name="Lee H."/>
            <person name="Stultz B."/>
            <person name="Hursh D.A."/>
            <person name="Mortin M.A."/>
        </authorList>
    </citation>
    <scope>FUNCTION</scope>
    <scope>INTERACTION WITH XPO1</scope>
    <scope>TISSUE SPECIFICITY</scope>
</reference>
<reference key="7">
    <citation type="journal article" date="2006" name="Cell">
        <title>Global, in vivo, and site-specific phosphorylation dynamics in signaling networks.</title>
        <authorList>
            <person name="Olsen J.V."/>
            <person name="Blagoev B."/>
            <person name="Gnad F."/>
            <person name="Macek B."/>
            <person name="Kumar C."/>
            <person name="Mortensen P."/>
            <person name="Mann M."/>
        </authorList>
    </citation>
    <scope>IDENTIFICATION BY MASS SPECTROMETRY [LARGE SCALE ANALYSIS]</scope>
    <source>
        <tissue>Cervix carcinoma</tissue>
    </source>
</reference>
<reference key="8">
    <citation type="journal article" date="2008" name="Proc. Natl. Acad. Sci. U.S.A.">
        <title>A quantitative atlas of mitotic phosphorylation.</title>
        <authorList>
            <person name="Dephoure N."/>
            <person name="Zhou C."/>
            <person name="Villen J."/>
            <person name="Beausoleil S.A."/>
            <person name="Bakalarski C.E."/>
            <person name="Elledge S.J."/>
            <person name="Gygi S.P."/>
        </authorList>
    </citation>
    <scope>PHOSPHORYLATION [LARGE SCALE ANALYSIS] AT SER-417; SER-747; SER-748 AND SER-763</scope>
    <scope>IDENTIFICATION BY MASS SPECTROMETRY [LARGE SCALE ANALYSIS]</scope>
    <source>
        <tissue>Cervix carcinoma</tissue>
    </source>
</reference>
<reference key="9">
    <citation type="journal article" date="2009" name="Sci. Signal.">
        <title>Quantitative phosphoproteomic analysis of T cell receptor signaling reveals system-wide modulation of protein-protein interactions.</title>
        <authorList>
            <person name="Mayya V."/>
            <person name="Lundgren D.H."/>
            <person name="Hwang S.-I."/>
            <person name="Rezaul K."/>
            <person name="Wu L."/>
            <person name="Eng J.K."/>
            <person name="Rodionov V."/>
            <person name="Han D.K."/>
        </authorList>
    </citation>
    <scope>PHOSPHORYLATION [LARGE SCALE ANALYSIS] AT SER-417</scope>
    <scope>IDENTIFICATION BY MASS SPECTROMETRY [LARGE SCALE ANALYSIS]</scope>
    <source>
        <tissue>Leukemic T-cell</tissue>
    </source>
</reference>
<reference key="10">
    <citation type="journal article" date="2010" name="Sci. Signal.">
        <title>Quantitative phosphoproteomics reveals widespread full phosphorylation site occupancy during mitosis.</title>
        <authorList>
            <person name="Olsen J.V."/>
            <person name="Vermeulen M."/>
            <person name="Santamaria A."/>
            <person name="Kumar C."/>
            <person name="Miller M.L."/>
            <person name="Jensen L.J."/>
            <person name="Gnad F."/>
            <person name="Cox J."/>
            <person name="Jensen T.S."/>
            <person name="Nigg E.A."/>
            <person name="Brunak S."/>
            <person name="Mann M."/>
        </authorList>
    </citation>
    <scope>PHOSPHORYLATION [LARGE SCALE ANALYSIS] AT SER-417 AND SER-831</scope>
    <scope>IDENTIFICATION BY MASS SPECTROMETRY [LARGE SCALE ANALYSIS]</scope>
    <source>
        <tissue>Cervix carcinoma</tissue>
    </source>
</reference>
<reference key="11">
    <citation type="journal article" date="2011" name="BMC Syst. Biol.">
        <title>Initial characterization of the human central proteome.</title>
        <authorList>
            <person name="Burkard T.R."/>
            <person name="Planyavsky M."/>
            <person name="Kaupe I."/>
            <person name="Breitwieser F.P."/>
            <person name="Buerckstuemmer T."/>
            <person name="Bennett K.L."/>
            <person name="Superti-Furga G."/>
            <person name="Colinge J."/>
        </authorList>
    </citation>
    <scope>IDENTIFICATION BY MASS SPECTROMETRY [LARGE SCALE ANALYSIS]</scope>
</reference>
<reference key="12">
    <citation type="journal article" date="2011" name="Sci. Signal.">
        <title>System-wide temporal characterization of the proteome and phosphoproteome of human embryonic stem cell differentiation.</title>
        <authorList>
            <person name="Rigbolt K.T."/>
            <person name="Prokhorova T.A."/>
            <person name="Akimov V."/>
            <person name="Henningsen J."/>
            <person name="Johansen P.T."/>
            <person name="Kratchmarova I."/>
            <person name="Kassem M."/>
            <person name="Mann M."/>
            <person name="Olsen J.V."/>
            <person name="Blagoev B."/>
        </authorList>
    </citation>
    <scope>PHOSPHORYLATION [LARGE SCALE ANALYSIS] AT SER-417; SER-747 AND SER-748</scope>
    <scope>IDENTIFICATION BY MASS SPECTROMETRY [LARGE SCALE ANALYSIS]</scope>
</reference>
<reference key="13">
    <citation type="journal article" date="2013" name="J. Proteome Res.">
        <title>Toward a comprehensive characterization of a human cancer cell phosphoproteome.</title>
        <authorList>
            <person name="Zhou H."/>
            <person name="Di Palma S."/>
            <person name="Preisinger C."/>
            <person name="Peng M."/>
            <person name="Polat A.N."/>
            <person name="Heck A.J."/>
            <person name="Mohammed S."/>
        </authorList>
    </citation>
    <scope>PHOSPHORYLATION [LARGE SCALE ANALYSIS] AT THR-7; SER-417 AND SER-831</scope>
    <scope>IDENTIFICATION BY MASS SPECTROMETRY [LARGE SCALE ANALYSIS]</scope>
    <source>
        <tissue>Cervix carcinoma</tissue>
        <tissue>Erythroleukemia</tissue>
    </source>
</reference>
<reference key="14">
    <citation type="journal article" date="2014" name="J. Proteomics">
        <title>An enzyme assisted RP-RPLC approach for in-depth analysis of human liver phosphoproteome.</title>
        <authorList>
            <person name="Bian Y."/>
            <person name="Song C."/>
            <person name="Cheng K."/>
            <person name="Dong M."/>
            <person name="Wang F."/>
            <person name="Huang J."/>
            <person name="Sun D."/>
            <person name="Wang L."/>
            <person name="Ye M."/>
            <person name="Zou H."/>
        </authorList>
    </citation>
    <scope>PHOSPHORYLATION [LARGE SCALE ANALYSIS] AT SER-417</scope>
    <scope>IDENTIFICATION BY MASS SPECTROMETRY [LARGE SCALE ANALYSIS]</scope>
    <source>
        <tissue>Liver</tissue>
    </source>
</reference>
<reference key="15">
    <citation type="journal article" date="2020" name="Mol. Cell">
        <title>GIGYF2 and 4EHP Inhibit Translation Initiation of Defective Messenger RNAs to Assist Ribosome-Associated Quality Control.</title>
        <authorList>
            <person name="Hickey K.L."/>
            <person name="Dickson K."/>
            <person name="Cogan J.Z."/>
            <person name="Replogle J.M."/>
            <person name="Schoof M."/>
            <person name="D'Orazio K.N."/>
            <person name="Sinha N.K."/>
            <person name="Hussmann J.A."/>
            <person name="Jost M."/>
            <person name="Frost A."/>
            <person name="Green R."/>
            <person name="Weissman J.S."/>
            <person name="Kostova K.K."/>
        </authorList>
    </citation>
    <scope>FUNCTION</scope>
</reference>
<reference evidence="23" key="16">
    <citation type="journal article" date="2015" name="Mol. Cell">
        <title>Structure and assembly pathway of the ribosome quality control complex.</title>
        <authorList>
            <person name="Shao S."/>
            <person name="Brown A."/>
            <person name="Santhanam B."/>
            <person name="Hegde R.S."/>
        </authorList>
    </citation>
    <scope>STRUCTURE BY ELECTRON MICROSCOPY (3.60 ANGSTROMS) OF 1-501 AS PART OF THE RIBOSOME QUALITY CONTROL COMPLEX</scope>
    <scope>FUNCTION</scope>
    <scope>SUBCELLULAR LOCATION</scope>
</reference>
<reference key="17">
    <citation type="journal article" date="2017" name="Mol. Psychiatry">
        <title>Clinical genomics expands the morbid genome of intellectual disability and offers a high diagnostic yield.</title>
        <authorList>
            <person name="Anazi S."/>
            <person name="Maddirevula S."/>
            <person name="Faqeih E."/>
            <person name="Alsedairy H."/>
            <person name="Alzahrani F."/>
            <person name="Shamseldin H.E."/>
            <person name="Patel N."/>
            <person name="Hashem M."/>
            <person name="Ibrahim N."/>
            <person name="Abdulwahab F."/>
            <person name="Ewida N."/>
            <person name="Alsaif H.S."/>
            <person name="Al Sharif H."/>
            <person name="Alamoudi W."/>
            <person name="Kentab A."/>
            <person name="Bashiri F.A."/>
            <person name="Alnaser M."/>
            <person name="AlWadei A.H."/>
            <person name="Alfadhel M."/>
            <person name="Eyaid W."/>
            <person name="Hashem A."/>
            <person name="Al Asmari A."/>
            <person name="Saleh M.M."/>
            <person name="AlSaman A."/>
            <person name="Alhasan K.A."/>
            <person name="Alsughayir M."/>
            <person name="Al Shammari M."/>
            <person name="Mahmoud A."/>
            <person name="Al-Hassnan Z.N."/>
            <person name="Al-Husain M."/>
            <person name="Osama Khalil R."/>
            <person name="Abd El Meguid N."/>
            <person name="Masri A."/>
            <person name="Ali R."/>
            <person name="Ben-Omran T."/>
            <person name="El Fishway P."/>
            <person name="Hashish A."/>
            <person name="Ercan Sencicek A."/>
            <person name="State M."/>
            <person name="Alazami A.M."/>
            <person name="Salih M.A."/>
            <person name="Altassan N."/>
            <person name="Arold S.T."/>
            <person name="Abouelhoda M."/>
            <person name="Wakil S.M."/>
            <person name="Monies D."/>
            <person name="Shaheen R."/>
            <person name="Alkuraya F.S."/>
        </authorList>
    </citation>
    <scope>INVOLVEMENT IN IDDSAPN</scope>
</reference>
<reference key="18">
    <citation type="journal article" date="2021" name="Hum. Genet.">
        <title>Biallelic loss-of-function variants in NEMF cause central nervous system impairment and axonal polyneuropathy.</title>
        <authorList>
            <person name="Ahmed A."/>
            <person name="Wang M."/>
            <person name="Bergant G."/>
            <person name="Maroofian R."/>
            <person name="Zhao R."/>
            <person name="Alfadhel M."/>
            <person name="Nashabat M."/>
            <person name="AlRifai M.T."/>
            <person name="Eyaid W."/>
            <person name="Alswaid A."/>
            <person name="Beetz C."/>
            <person name="Qin Y."/>
            <person name="Zhu T."/>
            <person name="Tian Q."/>
            <person name="Xia L."/>
            <person name="Wu H."/>
            <person name="Shen L."/>
            <person name="Dong S."/>
            <person name="Yang X."/>
            <person name="Liu C."/>
            <person name="Ma L."/>
            <person name="Zhang Q."/>
            <person name="Khan R."/>
            <person name="Shah A.A."/>
            <person name="Guo J."/>
            <person name="Tang B."/>
            <person name="Leonardis L."/>
            <person name="Writzl K."/>
            <person name="Peterlin B."/>
            <person name="Guo H."/>
            <person name="Malik S."/>
            <person name="Xia K."/>
            <person name="Hu Z."/>
        </authorList>
    </citation>
    <scope>INVOLVEMENT IN IDDSAPN</scope>
    <scope>TISSUE SPECIFICITY</scope>
    <scope>DEVELOPMENTAL STAGE</scope>
</reference>
<reference key="19">
    <citation type="journal article" date="2021" name="Cell Rep.">
        <title>Failure to degrade CAT-tailed proteins disrupts neuronal morphogenesis and cell survival.</title>
        <authorList>
            <person name="Udagawa T."/>
            <person name="Seki M."/>
            <person name="Okuyama T."/>
            <person name="Adachi S."/>
            <person name="Natsume T."/>
            <person name="Noguchi T."/>
            <person name="Matsuzawa A."/>
            <person name="Inada T."/>
        </authorList>
    </citation>
    <scope>FUNCTION</scope>
    <scope>IDENTIFICATION IN THE RQC COMPLEX</scope>
    <scope>MUTAGENESIS OF 96-ASP-ARG-97 AND ASP-96</scope>
</reference>
<reference key="20">
    <citation type="journal article" date="2021" name="Mol. Cell">
        <title>Convergence of mammalian RQC and C-end rule proteolytic pathways via alanine tailing.</title>
        <authorList>
            <person name="Thrun A."/>
            <person name="Garzia A."/>
            <person name="Kigoshi-Tansho Y."/>
            <person name="Patil P.R."/>
            <person name="Umbaugh C.S."/>
            <person name="Dallinger T."/>
            <person name="Liu J."/>
            <person name="Kreger S."/>
            <person name="Patrizi A."/>
            <person name="Cox G.A."/>
            <person name="Tuschl T."/>
            <person name="Joazeiro C.A.P."/>
        </authorList>
    </citation>
    <scope>FUNCTION</scope>
    <scope>IDENTIFICATION IN THE RQC COMPLEX</scope>
</reference>
<reference key="21">
    <citation type="journal article" date="2020" name="Nat. Commun.">
        <title>NEMF mutations that impair ribosome-associated quality control are associated with neuromuscular disease.</title>
        <authorList>
            <person name="Martin P.B."/>
            <person name="Kigoshi-Tansho Y."/>
            <person name="Sher R.B."/>
            <person name="Ravenscroft G."/>
            <person name="Stauffer J.E."/>
            <person name="Kumar R."/>
            <person name="Yonashiro R."/>
            <person name="Mueller T."/>
            <person name="Griffith C."/>
            <person name="Allen W."/>
            <person name="Pehlivan D."/>
            <person name="Harel T."/>
            <person name="Zenker M."/>
            <person name="Howting D."/>
            <person name="Schanze D."/>
            <person name="Faqeih E.A."/>
            <person name="Almontashiri N.A.M."/>
            <person name="Maroofian R."/>
            <person name="Houlden H."/>
            <person name="Mazaheri N."/>
            <person name="Galehdari H."/>
            <person name="Douglas G."/>
            <person name="Posey J.E."/>
            <person name="Ryan M."/>
            <person name="Lupski J.R."/>
            <person name="Laing N.G."/>
            <person name="Joazeiro C.A.P."/>
            <person name="Cox G.A."/>
        </authorList>
    </citation>
    <scope>VARIANTS IDDSAPN THR-553; 671-ARG--LYS-1076 DEL; 672-LYS--LYS-1076 DEL AND 870-ARG--LYS-1076 DEL</scope>
</reference>
<sequence length="1076" mass="122954">MKSRFSTIDLRAVLAELNASLLGMRVNNVYDVDNKTYLIRLQKPDFKATLLLESGIRIHTTEFEWPKNMMPSSFAMKCRKHLKSRRLVSAKQLGVDRIVDFQFGSDEAAYHLIIELYDRGNIVLTDYEYVILNILRFRTDEADDVKFAVRERYPLDHARAAEPLLTLERLTEIVASAPKGELLKRVLNPLLPYGPALIEHCLLENGFSGNVKVDEKLETKDIEKVLVSLQKAEDYMKTTSNFSGKGYIIQKREIKPSLEADKPVEDILTYEEFHPFLFSQHSQCPYIEFESFDKAVDEFYSKIEGQKIDLKALQQEKQALKKLDNVRKDHENRLEALQQAQEIDKLKGELIEMNLQIVDRAIQVVRSALANQIDWTEIGLIVKEAQAQGDPVASAIKELKLQTNHVTMLLRNPYLLSEEEDDDVDGDVNVEKNETEPPKGKKKKQKNKQLQKPQKNKPLLVDVDLSLSAYANAKKYYDHKRYAAKKTQKTVEAAEKAFKSAEKKTKQTLKEVQTVTSIQKARKVYWFEKFLWFISSENYLIIGGRDQQQNEIIVKRYLTPGDIYVHADLHGATSCVIKNPTGEPIPPRTLTEAGTMALCYSAAWDARVITSAWWVYHHQVSKTAPTGEYLTTGSFMIRGKKNFLPPSYLMMGFSFLFKVDESCVWRHQGERKVRVQDEDMETLASCTSELISEEMEQLDGGDTSSDEDKEEHETPVEVELMTQVDQEDITLQSGRDELNEELIQEESSEDEGEYEEVRKDQDSVGEMKDEGEETLNYPDTTIDLSHLQPQRSIQKLASKEESSNSSDSKSQSRRHLSAKERREMKKKKLPSDSGDLEALEGKDKEKESTVHIETHQNTSKNVAAVQPMKRGQKSKMKKMKEKYKDQDEEDRELIMKLLGSAGSNKEEKGKKGKKGKTKDEPVKKQPQKPRGGQRVSDNIKKETPFLEVITHELQDFAVDDPHDDKEEQDLDQQGNEENLFDSLTGQPHPEDVLLFAIPICAPYTTMTNYKYKVKLTPGVQKKGKAAKTALNSFMHSKEATAREKDLFRSVKDTDLSRNIPGKVKVSAPNLLNVKRK</sequence>
<feature type="chain" id="PRO_0000097642" description="Ribosome quality control complex subunit NEMF">
    <location>
        <begin position="1"/>
        <end position="1076"/>
    </location>
</feature>
<feature type="region of interest" description="Disordered" evidence="3">
    <location>
        <begin position="420"/>
        <end position="453"/>
    </location>
</feature>
<feature type="region of interest" description="Disordered" evidence="3">
    <location>
        <begin position="691"/>
        <end position="715"/>
    </location>
</feature>
<feature type="region of interest" description="Disordered" evidence="3">
    <location>
        <begin position="742"/>
        <end position="972"/>
    </location>
</feature>
<feature type="coiled-coil region" evidence="2">
    <location>
        <begin position="296"/>
        <end position="359"/>
    </location>
</feature>
<feature type="coiled-coil region" evidence="2">
    <location>
        <begin position="483"/>
        <end position="514"/>
    </location>
</feature>
<feature type="coiled-coil region" evidence="2">
    <location>
        <begin position="869"/>
        <end position="894"/>
    </location>
</feature>
<feature type="compositionally biased region" description="Basic and acidic residues" evidence="3">
    <location>
        <begin position="429"/>
        <end position="439"/>
    </location>
</feature>
<feature type="compositionally biased region" description="Basic residues" evidence="3">
    <location>
        <begin position="440"/>
        <end position="449"/>
    </location>
</feature>
<feature type="compositionally biased region" description="Acidic residues" evidence="3">
    <location>
        <begin position="691"/>
        <end position="710"/>
    </location>
</feature>
<feature type="compositionally biased region" description="Acidic residues" evidence="3">
    <location>
        <begin position="742"/>
        <end position="754"/>
    </location>
</feature>
<feature type="compositionally biased region" description="Basic and acidic residues" evidence="3">
    <location>
        <begin position="755"/>
        <end position="768"/>
    </location>
</feature>
<feature type="compositionally biased region" description="Polar residues" evidence="3">
    <location>
        <begin position="777"/>
        <end position="795"/>
    </location>
</feature>
<feature type="compositionally biased region" description="Basic and acidic residues" evidence="3">
    <location>
        <begin position="839"/>
        <end position="854"/>
    </location>
</feature>
<feature type="compositionally biased region" description="Basic residues" evidence="3">
    <location>
        <begin position="870"/>
        <end position="881"/>
    </location>
</feature>
<feature type="compositionally biased region" description="Basic and acidic residues" evidence="3">
    <location>
        <begin position="937"/>
        <end position="965"/>
    </location>
</feature>
<feature type="modified residue" description="Phosphothreonine" evidence="28">
    <location>
        <position position="7"/>
    </location>
</feature>
<feature type="modified residue" description="Phosphoserine" evidence="24 25 26 27 28 29">
    <location>
        <position position="417"/>
    </location>
</feature>
<feature type="modified residue" description="Phosphoserine" evidence="24 27">
    <location>
        <position position="747"/>
    </location>
</feature>
<feature type="modified residue" description="Phosphoserine" evidence="24 27">
    <location>
        <position position="748"/>
    </location>
</feature>
<feature type="modified residue" description="Phosphoserine" evidence="24">
    <location>
        <position position="763"/>
    </location>
</feature>
<feature type="modified residue" description="Phosphoserine" evidence="26 28">
    <location>
        <position position="831"/>
    </location>
</feature>
<feature type="splice variant" id="VSP_008396" description="In isoform 2." evidence="16">
    <original>MKSRFSTIDLRAVLAELNASL</original>
    <variation>MPKTCQCYVGTKTTNPSAWPS</variation>
    <location>
        <begin position="1"/>
        <end position="21"/>
    </location>
</feature>
<feature type="splice variant" id="VSP_010462" description="In isoform 2." evidence="16">
    <location>
        <begin position="22"/>
        <end position="821"/>
    </location>
</feature>
<feature type="splice variant" id="VSP_041064" description="In isoform 4." evidence="14 15">
    <location>
        <begin position="78"/>
        <end position="119"/>
    </location>
</feature>
<feature type="splice variant" id="VSP_041065" description="In isoform 5." evidence="14">
    <location>
        <begin position="221"/>
        <end position="245"/>
    </location>
</feature>
<feature type="splice variant" id="VSP_041066" description="In isoform 3." evidence="14">
    <location>
        <begin position="562"/>
        <end position="582"/>
    </location>
</feature>
<feature type="sequence variant" id="VAR_034488" description="In dbSNP:rs3100906." evidence="4 5">
    <original>S</original>
    <variation>C</variation>
    <location>
        <position position="257"/>
    </location>
</feature>
<feature type="sequence variant" id="VAR_085459" description="In IDDSAPN; uncertain significance." evidence="10">
    <original>I</original>
    <variation>T</variation>
    <location>
        <position position="553"/>
    </location>
</feature>
<feature type="sequence variant" id="VAR_085460" description="In IDDSAPN." evidence="10">
    <location>
        <begin position="671"/>
        <end position="1076"/>
    </location>
</feature>
<feature type="sequence variant" id="VAR_085461" description="In IDDSAPN." evidence="10">
    <location>
        <begin position="672"/>
        <end position="1076"/>
    </location>
</feature>
<feature type="sequence variant" id="VAR_085462" description="In IDDSAPN." evidence="10">
    <location>
        <begin position="870"/>
        <end position="1076"/>
    </location>
</feature>
<feature type="mutagenesis site" description="Abolished ability to mediate CAT tailing." evidence="12">
    <original>DR</original>
    <variation>AA</variation>
    <location>
        <begin position="96"/>
        <end position="97"/>
    </location>
</feature>
<feature type="mutagenesis site" description="Abolished ability to mediate CAT tailing." evidence="12">
    <original>D</original>
    <variation>A</variation>
    <location>
        <position position="96"/>
    </location>
</feature>
<feature type="sequence conflict" description="In Ref. 1; BAG56774." evidence="19" ref="1">
    <original>E</original>
    <variation>K</variation>
    <location>
        <position position="53"/>
    </location>
</feature>
<feature type="sequence conflict" description="In Ref. 4; AAH56687." evidence="19" ref="4">
    <original>P</original>
    <variation>S</variation>
    <location>
        <position position="438"/>
    </location>
</feature>
<feature type="sequence conflict" description="In Ref. 1; BAG56774." evidence="19" ref="1">
    <original>E</original>
    <variation>G</variation>
    <location>
        <position position="495"/>
    </location>
</feature>
<feature type="sequence conflict" description="In Ref. 1; BAG58070." evidence="19" ref="1">
    <original>P</original>
    <variation>PV</variation>
    <location>
        <position position="560"/>
    </location>
</feature>
<feature type="sequence conflict" description="In Ref. 2; CAE45889." evidence="19" ref="2">
    <original>A</original>
    <variation>V</variation>
    <location>
        <position position="593"/>
    </location>
</feature>
<feature type="sequence conflict" description="In Ref. 1; BAG65465." evidence="19" ref="1">
    <original>E</original>
    <variation>K</variation>
    <location>
        <position position="696"/>
    </location>
</feature>
<feature type="sequence conflict" description="In Ref. 2; BX648753." evidence="19" ref="2">
    <original>E</original>
    <variation>V</variation>
    <location>
        <position position="766"/>
    </location>
</feature>
<keyword id="KW-0002">3D-structure</keyword>
<keyword id="KW-0025">Alternative splicing</keyword>
<keyword id="KW-0175">Coiled coil</keyword>
<keyword id="KW-0963">Cytoplasm</keyword>
<keyword id="KW-0225">Disease variant</keyword>
<keyword id="KW-0991">Intellectual disability</keyword>
<keyword id="KW-0622">Neuropathy</keyword>
<keyword id="KW-0539">Nucleus</keyword>
<keyword id="KW-0597">Phosphoprotein</keyword>
<keyword id="KW-1267">Proteomics identification</keyword>
<keyword id="KW-1185">Reference proteome</keyword>
<organism>
    <name type="scientific">Homo sapiens</name>
    <name type="common">Human</name>
    <dbReference type="NCBI Taxonomy" id="9606"/>
    <lineage>
        <taxon>Eukaryota</taxon>
        <taxon>Metazoa</taxon>
        <taxon>Chordata</taxon>
        <taxon>Craniata</taxon>
        <taxon>Vertebrata</taxon>
        <taxon>Euteleostomi</taxon>
        <taxon>Mammalia</taxon>
        <taxon>Eutheria</taxon>
        <taxon>Euarchontoglires</taxon>
        <taxon>Primates</taxon>
        <taxon>Haplorrhini</taxon>
        <taxon>Catarrhini</taxon>
        <taxon>Hominidae</taxon>
        <taxon>Homo</taxon>
    </lineage>
</organism>
<accession>O60524</accession>
<accession>A0JLQ3</accession>
<accession>B3KSK1</accession>
<accession>B4DDL3</accession>
<accession>B4DHA9</accession>
<accession>B4E3F3</accession>
<accession>Q32Q66</accession>
<accession>Q8WW70</accession>
<accession>Q9NWG1</accession>
<proteinExistence type="evidence at protein level"/>
<comment type="function">
    <text evidence="1 6 7 9 12 13">Key component of the ribosome quality control complex (RQC), a ribosome-associated complex that mediates the extraction of incompletely synthesized nascent chains from stalled ribosomes as well as their ubiquitin-mediated proteasomal degradation (PubMed:25578875, PubMed:32726578, PubMed:33406423, PubMed:33909987). Thereby, frees 60S subunit ribosomes from the stalled translation complex and prevents the accumulation of nascent polypeptide chains that are potentially toxic for the cell (PubMed:25578875, PubMed:33406423, PubMed:33909987). Within the RQC complex, NEMF specifically binds stalled 60S ribosomal subunits by recognizing an exposed, nascent chain-conjugated tRNA moiety and promotes the recruitment of LTN1 to stalled 60S subunits (PubMed:25578875). Following binding to stalled 60S ribosomal subunits, NEMF mediates CAT tailing by recruiting alanine-charged tRNA to the A-site and directing the elongation of stalled nascent chains independently of mRNA or 40S subunits, leading to non-templated C-terminal alanine extensions (CAT tails) (PubMed:33406423, PubMed:33909987). Mainly recruits alanine-charged tRNAs, but can also other amino acid-charged tRNAs (PubMed:33406423, PubMed:33909987). CAT tailing is required to promote ubiquitination of stalled nascent chains by different E3 ubiquitin-protein ligases (PubMed:33909987). In the canonical RQC pathway (RQC-L), CAT tailing facilitates LTN1-dependent ubiquitination by exposing lysine residues that would otherwise remain buried in the ribosomal exit tunnel (By similarity). In the alternative RQC pathway (RQC-C) CAT tailing creates an C-degron mainly composed of alanine that is recognized by the CRL2(KLHDC10) and RCHY1/PIRH2 E3 ligases, leading to ubiquitination and degradation of stalled nascent chains (PubMed:33909987). NEMF may also indirectly play a role in nuclear export (PubMed:16103875).</text>
</comment>
<comment type="subunit">
    <text evidence="1 6 7 13">Component of the ribosome quality control complex (RQC), composed of the E3 ubiquitin ligase LTN1, TCF25 and NEMF associated with the 60S ribosomal subunit (PubMed:25578875, PubMed:33909987). The complex probably also contains VCP/p97 and its ubiquitin-binding cofactors (By similarity). Interacts (via its N-terminus) with XPO1 (PubMed:16103875).</text>
</comment>
<comment type="subcellular location">
    <subcellularLocation>
        <location evidence="7">Cytoplasm</location>
        <location evidence="7">Cytosol</location>
    </subcellularLocation>
    <subcellularLocation>
        <location evidence="20">Nucleus</location>
    </subcellularLocation>
</comment>
<comment type="alternative products">
    <event type="alternative splicing"/>
    <isoform>
        <id>O60524-1</id>
        <name>1</name>
        <sequence type="displayed"/>
    </isoform>
    <isoform>
        <id>O60524-2</id>
        <name>2</name>
        <sequence type="described" ref="VSP_008396 VSP_010462"/>
    </isoform>
    <isoform>
        <id>O60524-3</id>
        <name>3</name>
        <sequence type="described" ref="VSP_041066"/>
    </isoform>
    <isoform>
        <id>O60524-4</id>
        <name>4</name>
        <sequence type="described" ref="VSP_041064"/>
    </isoform>
    <isoform>
        <id>O60524-5</id>
        <name>5</name>
        <sequence type="described" ref="VSP_041065"/>
    </isoform>
</comment>
<comment type="tissue specificity">
    <text evidence="6 11">Expressed in brain, heart, liver, lung, spleen, and skeletal muscle. Also expressed at lower levels in stomach and testis.</text>
</comment>
<comment type="developmental stage">
    <text evidence="11">Expressed in the developing brain.</text>
</comment>
<comment type="disease" evidence="8 10 11">
    <disease id="DI-05972">
        <name>Intellectual developmental disorder with speech delay and axonal peripheral neuropathy</name>
        <acronym>IDDSAPN</acronym>
        <description>An autosomal recessive disorder characterized by mild global developmental delay, mild to moderate intellectual disability, motor impairment, unsteady or ataxic gait, and severe speech delay apparent in the first years of life. Signs of a peripheral axonal neuropathy, including progressive distal muscle weakness and atrophy of the lower limbs, foot and hand deformities, and dysarthria, are observed in most patients. Some patients may have autistic features or attention deficit-hyperactivity disorder.</description>
        <dbReference type="MIM" id="619099"/>
    </disease>
    <text>The disease is caused by variants affecting the gene represented in this entry.</text>
</comment>
<comment type="similarity">
    <text evidence="19">Belongs to the NEMF family.</text>
</comment>
<comment type="sequence caution" evidence="19">
    <conflict type="frameshift">
        <sequence resource="EMBL-CDS" id="AAC18036"/>
    </conflict>
</comment>
<comment type="sequence caution" evidence="19">
    <conflict type="miscellaneous discrepancy">
        <sequence resource="EMBL-CDS" id="AAH06001"/>
    </conflict>
    <text>Contaminating sequence. Potential poly-A sequence.</text>
</comment>
<comment type="sequence caution" evidence="19">
    <conflict type="erroneous initiation">
        <sequence resource="EMBL-CDS" id="AAH20794"/>
    </conflict>
    <text>Truncated N-terminus.</text>
</comment>
<comment type="sequence caution" evidence="19">
    <conflict type="miscellaneous discrepancy">
        <sequence resource="EMBL-CDS" id="AAH56687"/>
    </conflict>
    <text>Contaminating sequence. Potential poly-A sequence.</text>
</comment>
<comment type="sequence caution" evidence="19">
    <conflict type="erroneous initiation">
        <sequence resource="EMBL-CDS" id="AAI07765"/>
    </conflict>
    <text>Extended N-terminus.</text>
</comment>
<comment type="sequence caution" evidence="19">
    <conflict type="erroneous initiation">
        <sequence resource="EMBL-CDS" id="BAG52763"/>
    </conflict>
    <text>Truncated N-terminus.</text>
</comment>
<comment type="sequence caution" evidence="19">
    <conflict type="erroneous translation">
        <sequence resource="EMBL-CDS" id="BAG58070"/>
    </conflict>
    <text>Wrong choice of frame.</text>
</comment>
<comment type="sequence caution" evidence="19">
    <conflict type="frameshift">
        <sequence resource="EMBL-CDS" id="BAG58070"/>
    </conflict>
</comment>
<comment type="sequence caution" evidence="19">
    <conflict type="miscellaneous discrepancy">
        <sequence resource="EMBL-CDS" id="BAG58070"/>
    </conflict>
    <text>Intron retention.</text>
</comment>
<protein>
    <recommendedName>
        <fullName evidence="21">Ribosome quality control complex subunit NEMF</fullName>
    </recommendedName>
    <alternativeName>
        <fullName>Antigen NY-CO-1</fullName>
    </alternativeName>
    <alternativeName>
        <fullName evidence="22">Nuclear export mediator factor</fullName>
    </alternativeName>
    <alternativeName>
        <fullName evidence="18">Serologically defined colon cancer antigen 1</fullName>
    </alternativeName>
</protein>
<evidence type="ECO:0000250" key="1">
    <source>
        <dbReference type="UniProtKB" id="Q12532"/>
    </source>
</evidence>
<evidence type="ECO:0000255" key="2"/>
<evidence type="ECO:0000256" key="3">
    <source>
        <dbReference type="SAM" id="MobiDB-lite"/>
    </source>
</evidence>
<evidence type="ECO:0000269" key="4">
    <source>
    </source>
</evidence>
<evidence type="ECO:0000269" key="5">
    <source>
    </source>
</evidence>
<evidence type="ECO:0000269" key="6">
    <source>
    </source>
</evidence>
<evidence type="ECO:0000269" key="7">
    <source>
    </source>
</evidence>
<evidence type="ECO:0000269" key="8">
    <source>
    </source>
</evidence>
<evidence type="ECO:0000269" key="9">
    <source>
    </source>
</evidence>
<evidence type="ECO:0000269" key="10">
    <source>
    </source>
</evidence>
<evidence type="ECO:0000269" key="11">
    <source>
    </source>
</evidence>
<evidence type="ECO:0000269" key="12">
    <source>
    </source>
</evidence>
<evidence type="ECO:0000269" key="13">
    <source>
    </source>
</evidence>
<evidence type="ECO:0000303" key="14">
    <source>
    </source>
</evidence>
<evidence type="ECO:0000303" key="15">
    <source>
    </source>
</evidence>
<evidence type="ECO:0000303" key="16">
    <source>
    </source>
</evidence>
<evidence type="ECO:0000303" key="17">
    <source>
    </source>
</evidence>
<evidence type="ECO:0000303" key="18">
    <source>
    </source>
</evidence>
<evidence type="ECO:0000305" key="19"/>
<evidence type="ECO:0000305" key="20">
    <source>
    </source>
</evidence>
<evidence type="ECO:0000305" key="21">
    <source>
    </source>
</evidence>
<evidence type="ECO:0000312" key="22">
    <source>
        <dbReference type="HGNC" id="HGNC:10663"/>
    </source>
</evidence>
<evidence type="ECO:0007744" key="23">
    <source>
        <dbReference type="PDB" id="3J92"/>
    </source>
</evidence>
<evidence type="ECO:0007744" key="24">
    <source>
    </source>
</evidence>
<evidence type="ECO:0007744" key="25">
    <source>
    </source>
</evidence>
<evidence type="ECO:0007744" key="26">
    <source>
    </source>
</evidence>
<evidence type="ECO:0007744" key="27">
    <source>
    </source>
</evidence>
<evidence type="ECO:0007744" key="28">
    <source>
    </source>
</evidence>
<evidence type="ECO:0007744" key="29">
    <source>
    </source>
</evidence>
<name>NEMF_HUMAN</name>
<gene>
    <name evidence="17 22" type="primary">NEMF</name>
    <name evidence="18" type="synonym">SDCCAG1</name>
</gene>